<comment type="function">
    <text evidence="3">Cytochrome P450 that catalyzes an intramolecular C-C phenol coupling of (S)-reticuline in magnoflorine biosynthesis. Catalyzes the formation of (S)-corytuberine from (S)-reticuline, and also, with a lover efficiency, the 4'-O-demethylation of codamine to produce orientaline, and subsequent C-C-phenol coupling of orientaline. Can also use (R,S)-norreticuline, (R,S)-orientaline, (S)-N-methylcoclaurine and (S)-coclaurine as substrates, but not (R,S)-6-O-methyllaudanosoline, (R,S)-6-O-methylnorlaudanosoline, (R,S)-laudanine, (R,S)-norlaudanine, (R,S)-4'-O-methyllaudanosoline, (R,S)-pseudocodamine, (R,S)-norpseudocodamine, (R,S)-laudanosine, (R,S)-norlaudanosine, (R,S)-laudanosoline or (R,S)-norlaudanosoline.</text>
</comment>
<comment type="catalytic activity">
    <reaction evidence="3">
        <text>(S)-reticuline + reduced [NADPH--hemoprotein reductase] + O2 = (S)-corytuberine + oxidized [NADPH--hemoprotein reductase] + 2 H2O + 2 H(+)</text>
        <dbReference type="Rhea" id="RHEA:51540"/>
        <dbReference type="Rhea" id="RHEA-COMP:11964"/>
        <dbReference type="Rhea" id="RHEA-COMP:11965"/>
        <dbReference type="ChEBI" id="CHEBI:15377"/>
        <dbReference type="ChEBI" id="CHEBI:15378"/>
        <dbReference type="ChEBI" id="CHEBI:15379"/>
        <dbReference type="ChEBI" id="CHEBI:57618"/>
        <dbReference type="ChEBI" id="CHEBI:57873"/>
        <dbReference type="ChEBI" id="CHEBI:58210"/>
        <dbReference type="ChEBI" id="CHEBI:81200"/>
        <dbReference type="EC" id="1.14.19.51"/>
    </reaction>
</comment>
<comment type="cofactor">
    <cofactor evidence="3">
        <name>heme</name>
        <dbReference type="ChEBI" id="CHEBI:30413"/>
    </cofactor>
</comment>
<comment type="activity regulation">
    <text evidence="3">Inhibited by ketoconazole.</text>
</comment>
<comment type="biophysicochemical properties">
    <kinetics>
        <KM evidence="3">34.1 uM for (R,S)-reticuline</KM>
    </kinetics>
</comment>
<comment type="subcellular location">
    <subcellularLocation>
        <location evidence="5">Endoplasmic reticulum membrane</location>
        <topology evidence="2">Single-pass membrane protein</topology>
    </subcellularLocation>
</comment>
<comment type="similarity">
    <text evidence="4">Belongs to the cytochrome P450 family.</text>
</comment>
<dbReference type="EC" id="1.14.19.51" evidence="3"/>
<dbReference type="EMBL" id="AB288053">
    <property type="protein sequence ID" value="BAF80448.1"/>
    <property type="molecule type" value="mRNA"/>
</dbReference>
<dbReference type="SMR" id="A8CDR5"/>
<dbReference type="KEGG" id="ag:BAF80448"/>
<dbReference type="BRENDA" id="1.14.19.51">
    <property type="organism ID" value="1610"/>
</dbReference>
<dbReference type="GO" id="GO:0005789">
    <property type="term" value="C:endoplasmic reticulum membrane"/>
    <property type="evidence" value="ECO:0007669"/>
    <property type="project" value="UniProtKB-SubCell"/>
</dbReference>
<dbReference type="GO" id="GO:0102963">
    <property type="term" value="F:(S)-corytuberine synthase activity"/>
    <property type="evidence" value="ECO:0007669"/>
    <property type="project" value="UniProtKB-EC"/>
</dbReference>
<dbReference type="GO" id="GO:0020037">
    <property type="term" value="F:heme binding"/>
    <property type="evidence" value="ECO:0007669"/>
    <property type="project" value="InterPro"/>
</dbReference>
<dbReference type="GO" id="GO:0005506">
    <property type="term" value="F:iron ion binding"/>
    <property type="evidence" value="ECO:0007669"/>
    <property type="project" value="InterPro"/>
</dbReference>
<dbReference type="GO" id="GO:0004497">
    <property type="term" value="F:monooxygenase activity"/>
    <property type="evidence" value="ECO:0007669"/>
    <property type="project" value="UniProtKB-KW"/>
</dbReference>
<dbReference type="GO" id="GO:0009820">
    <property type="term" value="P:alkaloid metabolic process"/>
    <property type="evidence" value="ECO:0007669"/>
    <property type="project" value="UniProtKB-KW"/>
</dbReference>
<dbReference type="GO" id="GO:0044550">
    <property type="term" value="P:secondary metabolite biosynthetic process"/>
    <property type="evidence" value="ECO:0007669"/>
    <property type="project" value="UniProtKB-ARBA"/>
</dbReference>
<dbReference type="CDD" id="cd11073">
    <property type="entry name" value="CYP76-like"/>
    <property type="match status" value="1"/>
</dbReference>
<dbReference type="FunFam" id="1.10.630.10:FF:000126">
    <property type="entry name" value="Predicted protein"/>
    <property type="match status" value="1"/>
</dbReference>
<dbReference type="Gene3D" id="1.10.630.10">
    <property type="entry name" value="Cytochrome P450"/>
    <property type="match status" value="1"/>
</dbReference>
<dbReference type="InterPro" id="IPR001128">
    <property type="entry name" value="Cyt_P450"/>
</dbReference>
<dbReference type="InterPro" id="IPR017972">
    <property type="entry name" value="Cyt_P450_CS"/>
</dbReference>
<dbReference type="InterPro" id="IPR002401">
    <property type="entry name" value="Cyt_P450_E_grp-I"/>
</dbReference>
<dbReference type="InterPro" id="IPR036396">
    <property type="entry name" value="Cyt_P450_sf"/>
</dbReference>
<dbReference type="PANTHER" id="PTHR47950:SF49">
    <property type="entry name" value="CYTOCHROME P450"/>
    <property type="match status" value="1"/>
</dbReference>
<dbReference type="PANTHER" id="PTHR47950">
    <property type="entry name" value="CYTOCHROME P450, FAMILY 76, SUBFAMILY C, POLYPEPTIDE 5-RELATED"/>
    <property type="match status" value="1"/>
</dbReference>
<dbReference type="Pfam" id="PF00067">
    <property type="entry name" value="p450"/>
    <property type="match status" value="1"/>
</dbReference>
<dbReference type="PRINTS" id="PR00463">
    <property type="entry name" value="EP450I"/>
</dbReference>
<dbReference type="PRINTS" id="PR00385">
    <property type="entry name" value="P450"/>
</dbReference>
<dbReference type="SUPFAM" id="SSF48264">
    <property type="entry name" value="Cytochrome P450"/>
    <property type="match status" value="1"/>
</dbReference>
<dbReference type="PROSITE" id="PS00086">
    <property type="entry name" value="CYTOCHROME_P450"/>
    <property type="match status" value="1"/>
</dbReference>
<sequence length="486" mass="55012">MDLQIALFSLIPVILVFILLLKPKYKNLPPGPHPWPLIGNLPILFTNTEVPLHITLANMARTHGPIMILWLGTQPTVMASTAEAAMEILKTHDRIFSARHIRMSFRLKHHIKYSLVWSDCTDYWKLLRKIVRTEIFSPKMLQAQSHVREQKVAELIDFLRSKEGQVVKISQFVFGTLLNILGNVVFSKDVFVYGDETDKGGIQNLIREMLMIGAEPNVAEFYPSLEELDLQGLKKKCDERFIRVMKMWEGTVKERKANRNEESKDMLDVLLANDFNDAQINALFLETFGPGSETSSATIEWVIAELIKSPKEMAKVRKELNEVVGTSTIKESDLPQLPYLQACIKEAMRLHPAAPFLLPRRAAETCEVMGYTIPKNSQVLVNAYAIGRDPKSWKDPSTFWPERFLESDVDFHGAHYQFIPFGSGRRTCVGMPLATRTIPLIVGSLVHNYDFGLPGGNRPEDLKMNEMLSLTLAIDPSLCVVPKARA</sequence>
<reference key="1">
    <citation type="journal article" date="2008" name="J. Biol. Chem.">
        <title>Molecular cloning and characterization of CYP80G2, a cytochrome P450 that catalyzes an intramolecular C-C phenol coupling of (S)-reticuline in magnoflorine biosynthesis, from cultured Coptis japonica cells.</title>
        <authorList>
            <person name="Ikezawa N."/>
            <person name="Iwasa K."/>
            <person name="Sato F."/>
        </authorList>
    </citation>
    <scope>NUCLEOTIDE SEQUENCE [MRNA]</scope>
    <scope>FUNCTION</scope>
    <scope>CATALYTIC ACTIVITY</scope>
    <scope>SUBSTRATE SPECIFICITY</scope>
    <scope>ACTIVITY REGULATION</scope>
    <scope>COFACTOR</scope>
    <scope>BIOPHYSICOCHEMICAL PROPERTIES</scope>
    <scope>MUTAGENESIS OF PRO-290</scope>
    <source>
        <strain>cv. dissecta</strain>
    </source>
</reference>
<name>C80G2_COPJA</name>
<feature type="chain" id="PRO_0000439853" description="Corytuberine synthase">
    <location>
        <begin position="1"/>
        <end position="486"/>
    </location>
</feature>
<feature type="transmembrane region" description="Helical" evidence="2">
    <location>
        <begin position="6"/>
        <end position="21"/>
    </location>
</feature>
<feature type="binding site" description="axial binding residue" evidence="1">
    <location>
        <position position="428"/>
    </location>
    <ligand>
        <name>heme</name>
        <dbReference type="ChEBI" id="CHEBI:30413"/>
    </ligand>
    <ligandPart>
        <name>Fe</name>
        <dbReference type="ChEBI" id="CHEBI:18248"/>
    </ligandPart>
</feature>
<feature type="mutagenesis site" description="No effect on catalytic activity." evidence="3">
    <original>P</original>
    <variation>A</variation>
    <variation>G</variation>
    <location>
        <position position="290"/>
    </location>
</feature>
<evidence type="ECO:0000250" key="1">
    <source>
        <dbReference type="UniProtKB" id="Q96242"/>
    </source>
</evidence>
<evidence type="ECO:0000255" key="2"/>
<evidence type="ECO:0000269" key="3">
    <source>
    </source>
</evidence>
<evidence type="ECO:0000305" key="4"/>
<evidence type="ECO:0000305" key="5">
    <source>
    </source>
</evidence>
<evidence type="ECO:0000312" key="6">
    <source>
        <dbReference type="EMBL" id="BAF80448.1"/>
    </source>
</evidence>
<gene>
    <name evidence="6" type="primary">CYP80G2</name>
</gene>
<keyword id="KW-0017">Alkaloid metabolism</keyword>
<keyword id="KW-0256">Endoplasmic reticulum</keyword>
<keyword id="KW-0349">Heme</keyword>
<keyword id="KW-0408">Iron</keyword>
<keyword id="KW-0472">Membrane</keyword>
<keyword id="KW-0479">Metal-binding</keyword>
<keyword id="KW-0503">Monooxygenase</keyword>
<keyword id="KW-0560">Oxidoreductase</keyword>
<keyword id="KW-0812">Transmembrane</keyword>
<keyword id="KW-1133">Transmembrane helix</keyword>
<organism>
    <name type="scientific">Coptis japonica</name>
    <name type="common">Japanese goldthread</name>
    <dbReference type="NCBI Taxonomy" id="3442"/>
    <lineage>
        <taxon>Eukaryota</taxon>
        <taxon>Viridiplantae</taxon>
        <taxon>Streptophyta</taxon>
        <taxon>Embryophyta</taxon>
        <taxon>Tracheophyta</taxon>
        <taxon>Spermatophyta</taxon>
        <taxon>Magnoliopsida</taxon>
        <taxon>Ranunculales</taxon>
        <taxon>Ranunculaceae</taxon>
        <taxon>Coptidoideae</taxon>
        <taxon>Coptis</taxon>
    </lineage>
</organism>
<accession>A8CDR5</accession>
<protein>
    <recommendedName>
        <fullName evidence="6">Corytuberine synthase</fullName>
        <ecNumber evidence="3">1.14.19.51</ecNumber>
    </recommendedName>
    <alternativeName>
        <fullName>Cytochrome P450 80G2</fullName>
    </alternativeName>
</protein>
<proteinExistence type="evidence at protein level"/>